<feature type="chain" id="PRO_0000306935" description="Aspartate 1-decarboxylase beta chain" evidence="1">
    <location>
        <begin position="1"/>
        <end position="24"/>
    </location>
</feature>
<feature type="chain" id="PRO_0000306936" description="Aspartate 1-decarboxylase alpha chain" evidence="1">
    <location>
        <begin position="25"/>
        <end position="128"/>
    </location>
</feature>
<feature type="active site" description="Schiff-base intermediate with substrate; via pyruvic acid" evidence="1">
    <location>
        <position position="25"/>
    </location>
</feature>
<feature type="active site" description="Proton donor" evidence="1">
    <location>
        <position position="58"/>
    </location>
</feature>
<feature type="binding site" evidence="1">
    <location>
        <position position="57"/>
    </location>
    <ligand>
        <name>substrate</name>
    </ligand>
</feature>
<feature type="binding site" evidence="1">
    <location>
        <begin position="73"/>
        <end position="75"/>
    </location>
    <ligand>
        <name>substrate</name>
    </ligand>
</feature>
<feature type="modified residue" description="Pyruvic acid (Ser)" evidence="1">
    <location>
        <position position="25"/>
    </location>
</feature>
<comment type="function">
    <text evidence="1">Catalyzes the pyruvoyl-dependent decarboxylation of aspartate to produce beta-alanine.</text>
</comment>
<comment type="catalytic activity">
    <reaction evidence="1">
        <text>L-aspartate + H(+) = beta-alanine + CO2</text>
        <dbReference type="Rhea" id="RHEA:19497"/>
        <dbReference type="ChEBI" id="CHEBI:15378"/>
        <dbReference type="ChEBI" id="CHEBI:16526"/>
        <dbReference type="ChEBI" id="CHEBI:29991"/>
        <dbReference type="ChEBI" id="CHEBI:57966"/>
        <dbReference type="EC" id="4.1.1.11"/>
    </reaction>
</comment>
<comment type="cofactor">
    <cofactor evidence="1">
        <name>pyruvate</name>
        <dbReference type="ChEBI" id="CHEBI:15361"/>
    </cofactor>
    <text evidence="1">Binds 1 pyruvoyl group covalently per subunit.</text>
</comment>
<comment type="pathway">
    <text evidence="1">Cofactor biosynthesis; (R)-pantothenate biosynthesis; beta-alanine from L-aspartate: step 1/1.</text>
</comment>
<comment type="subunit">
    <text evidence="1">Heterooctamer of four alpha and four beta subunits.</text>
</comment>
<comment type="subcellular location">
    <subcellularLocation>
        <location evidence="1">Cytoplasm</location>
    </subcellularLocation>
</comment>
<comment type="PTM">
    <text evidence="1">Is synthesized initially as an inactive proenzyme, which is activated by self-cleavage at a specific serine bond to produce a beta-subunit with a hydroxyl group at its C-terminus and an alpha-subunit with a pyruvoyl group at its N-terminus.</text>
</comment>
<comment type="similarity">
    <text evidence="1">Belongs to the PanD family.</text>
</comment>
<sequence>MQRHMLKSKIHRAAVTHCELHYEGSCAIDEDLLEAAGLIENERIDIWNINNGERFSTYAIKGERGSGMISLNGSAARRAQLGDLVIIAAFAMVDEAELQAGWKPKLVFIDDGNKIKGHRDHVPTQNWT</sequence>
<organism>
    <name type="scientific">Burkholderia orbicola (strain AU 1054)</name>
    <dbReference type="NCBI Taxonomy" id="331271"/>
    <lineage>
        <taxon>Bacteria</taxon>
        <taxon>Pseudomonadati</taxon>
        <taxon>Pseudomonadota</taxon>
        <taxon>Betaproteobacteria</taxon>
        <taxon>Burkholderiales</taxon>
        <taxon>Burkholderiaceae</taxon>
        <taxon>Burkholderia</taxon>
        <taxon>Burkholderia cepacia complex</taxon>
        <taxon>Burkholderia orbicola</taxon>
    </lineage>
</organism>
<gene>
    <name evidence="1" type="primary">panD</name>
    <name type="ordered locus">Bcen_1832</name>
</gene>
<dbReference type="EC" id="4.1.1.11" evidence="1"/>
<dbReference type="EMBL" id="CP000378">
    <property type="protein sequence ID" value="ABF76735.1"/>
    <property type="molecule type" value="Genomic_DNA"/>
</dbReference>
<dbReference type="SMR" id="Q1BUH0"/>
<dbReference type="HOGENOM" id="CLU_115305_2_1_4"/>
<dbReference type="UniPathway" id="UPA00028">
    <property type="reaction ID" value="UER00002"/>
</dbReference>
<dbReference type="GO" id="GO:0005829">
    <property type="term" value="C:cytosol"/>
    <property type="evidence" value="ECO:0007669"/>
    <property type="project" value="TreeGrafter"/>
</dbReference>
<dbReference type="GO" id="GO:0004068">
    <property type="term" value="F:aspartate 1-decarboxylase activity"/>
    <property type="evidence" value="ECO:0007669"/>
    <property type="project" value="UniProtKB-UniRule"/>
</dbReference>
<dbReference type="GO" id="GO:0006523">
    <property type="term" value="P:alanine biosynthetic process"/>
    <property type="evidence" value="ECO:0007669"/>
    <property type="project" value="InterPro"/>
</dbReference>
<dbReference type="GO" id="GO:0015940">
    <property type="term" value="P:pantothenate biosynthetic process"/>
    <property type="evidence" value="ECO:0007669"/>
    <property type="project" value="UniProtKB-UniRule"/>
</dbReference>
<dbReference type="CDD" id="cd06919">
    <property type="entry name" value="Asp_decarbox"/>
    <property type="match status" value="1"/>
</dbReference>
<dbReference type="Gene3D" id="2.40.40.20">
    <property type="match status" value="1"/>
</dbReference>
<dbReference type="HAMAP" id="MF_00446">
    <property type="entry name" value="PanD"/>
    <property type="match status" value="1"/>
</dbReference>
<dbReference type="InterPro" id="IPR009010">
    <property type="entry name" value="Asp_de-COase-like_dom_sf"/>
</dbReference>
<dbReference type="InterPro" id="IPR003190">
    <property type="entry name" value="Asp_decarbox"/>
</dbReference>
<dbReference type="NCBIfam" id="TIGR00223">
    <property type="entry name" value="panD"/>
    <property type="match status" value="1"/>
</dbReference>
<dbReference type="PANTHER" id="PTHR21012">
    <property type="entry name" value="ASPARTATE 1-DECARBOXYLASE"/>
    <property type="match status" value="1"/>
</dbReference>
<dbReference type="PANTHER" id="PTHR21012:SF0">
    <property type="entry name" value="ASPARTATE 1-DECARBOXYLASE"/>
    <property type="match status" value="1"/>
</dbReference>
<dbReference type="Pfam" id="PF02261">
    <property type="entry name" value="Asp_decarbox"/>
    <property type="match status" value="1"/>
</dbReference>
<dbReference type="PIRSF" id="PIRSF006246">
    <property type="entry name" value="Asp_decarbox"/>
    <property type="match status" value="1"/>
</dbReference>
<dbReference type="SUPFAM" id="SSF50692">
    <property type="entry name" value="ADC-like"/>
    <property type="match status" value="1"/>
</dbReference>
<evidence type="ECO:0000255" key="1">
    <source>
        <dbReference type="HAMAP-Rule" id="MF_00446"/>
    </source>
</evidence>
<accession>Q1BUH0</accession>
<reference key="1">
    <citation type="submission" date="2006-05" db="EMBL/GenBank/DDBJ databases">
        <title>Complete sequence of chromosome 1 of Burkholderia cenocepacia AU 1054.</title>
        <authorList>
            <consortium name="US DOE Joint Genome Institute"/>
            <person name="Copeland A."/>
            <person name="Lucas S."/>
            <person name="Lapidus A."/>
            <person name="Barry K."/>
            <person name="Detter J.C."/>
            <person name="Glavina del Rio T."/>
            <person name="Hammon N."/>
            <person name="Israni S."/>
            <person name="Dalin E."/>
            <person name="Tice H."/>
            <person name="Pitluck S."/>
            <person name="Chain P."/>
            <person name="Malfatti S."/>
            <person name="Shin M."/>
            <person name="Vergez L."/>
            <person name="Schmutz J."/>
            <person name="Larimer F."/>
            <person name="Land M."/>
            <person name="Hauser L."/>
            <person name="Kyrpides N."/>
            <person name="Lykidis A."/>
            <person name="LiPuma J.J."/>
            <person name="Konstantinidis K."/>
            <person name="Tiedje J.M."/>
            <person name="Richardson P."/>
        </authorList>
    </citation>
    <scope>NUCLEOTIDE SEQUENCE [LARGE SCALE GENOMIC DNA]</scope>
    <source>
        <strain>AU 1054</strain>
    </source>
</reference>
<protein>
    <recommendedName>
        <fullName evidence="1">Aspartate 1-decarboxylase</fullName>
        <ecNumber evidence="1">4.1.1.11</ecNumber>
    </recommendedName>
    <alternativeName>
        <fullName evidence="1">Aspartate alpha-decarboxylase</fullName>
    </alternativeName>
    <component>
        <recommendedName>
            <fullName evidence="1">Aspartate 1-decarboxylase beta chain</fullName>
        </recommendedName>
    </component>
    <component>
        <recommendedName>
            <fullName evidence="1">Aspartate 1-decarboxylase alpha chain</fullName>
        </recommendedName>
    </component>
</protein>
<name>PAND_BURO1</name>
<keyword id="KW-0068">Autocatalytic cleavage</keyword>
<keyword id="KW-0963">Cytoplasm</keyword>
<keyword id="KW-0210">Decarboxylase</keyword>
<keyword id="KW-0456">Lyase</keyword>
<keyword id="KW-0566">Pantothenate biosynthesis</keyword>
<keyword id="KW-0670">Pyruvate</keyword>
<keyword id="KW-0704">Schiff base</keyword>
<keyword id="KW-0865">Zymogen</keyword>
<proteinExistence type="inferred from homology"/>